<name>CAHH_VACCT</name>
<organismHost>
    <name type="scientific">Homo sapiens</name>
    <name type="common">Human</name>
    <dbReference type="NCBI Taxonomy" id="9606"/>
</organismHost>
<gene>
    <name type="primary">OPG105</name>
    <name type="ORF">TD8L</name>
</gene>
<proteinExistence type="evidence at transcript level"/>
<feature type="chain" id="PRO_0000077450" description="Cell surface-binding protein OPG105">
    <location>
        <begin position="1"/>
        <end position="304"/>
    </location>
</feature>
<feature type="topological domain" description="Virion surface" evidence="3">
    <location>
        <begin position="1"/>
        <end position="275"/>
    </location>
</feature>
<feature type="transmembrane region" description="Helical" evidence="3">
    <location>
        <begin position="276"/>
        <end position="294"/>
    </location>
</feature>
<feature type="topological domain" description="Intravirion" evidence="3">
    <location>
        <begin position="295"/>
        <end position="304"/>
    </location>
</feature>
<feature type="domain" description="Alpha-carbonic anhydrase" evidence="4">
    <location>
        <begin position="1"/>
        <end position="235"/>
    </location>
</feature>
<feature type="disulfide bond" description="Interchain" evidence="1">
    <location>
        <position position="262"/>
    </location>
</feature>
<dbReference type="EMBL" id="AF095689">
    <property type="protein sequence ID" value="AAF33977.1"/>
    <property type="molecule type" value="Genomic_DNA"/>
</dbReference>
<dbReference type="SMR" id="Q9JFA1"/>
<dbReference type="ABCD" id="Q9JFA1">
    <property type="antibodies" value="3 sequenced antibodies"/>
</dbReference>
<dbReference type="Proteomes" id="UP000163220">
    <property type="component" value="Genome"/>
</dbReference>
<dbReference type="GO" id="GO:0016020">
    <property type="term" value="C:membrane"/>
    <property type="evidence" value="ECO:0007669"/>
    <property type="project" value="UniProtKB-KW"/>
</dbReference>
<dbReference type="GO" id="GO:0019031">
    <property type="term" value="C:viral envelope"/>
    <property type="evidence" value="ECO:0007669"/>
    <property type="project" value="UniProtKB-KW"/>
</dbReference>
<dbReference type="GO" id="GO:0055036">
    <property type="term" value="C:virion membrane"/>
    <property type="evidence" value="ECO:0007669"/>
    <property type="project" value="UniProtKB-SubCell"/>
</dbReference>
<dbReference type="GO" id="GO:0004089">
    <property type="term" value="F:carbonate dehydratase activity"/>
    <property type="evidence" value="ECO:0007669"/>
    <property type="project" value="InterPro"/>
</dbReference>
<dbReference type="GO" id="GO:0008270">
    <property type="term" value="F:zinc ion binding"/>
    <property type="evidence" value="ECO:0007669"/>
    <property type="project" value="InterPro"/>
</dbReference>
<dbReference type="GO" id="GO:0046718">
    <property type="term" value="P:symbiont entry into host cell"/>
    <property type="evidence" value="ECO:0007669"/>
    <property type="project" value="UniProtKB-KW"/>
</dbReference>
<dbReference type="GO" id="GO:0019062">
    <property type="term" value="P:virion attachment to host cell"/>
    <property type="evidence" value="ECO:0007669"/>
    <property type="project" value="UniProtKB-KW"/>
</dbReference>
<dbReference type="Gene3D" id="3.10.200.10">
    <property type="entry name" value="Alpha carbonic anhydrase"/>
    <property type="match status" value="1"/>
</dbReference>
<dbReference type="InterPro" id="IPR001148">
    <property type="entry name" value="CA_dom"/>
</dbReference>
<dbReference type="InterPro" id="IPR036398">
    <property type="entry name" value="CA_dom_sf"/>
</dbReference>
<dbReference type="InterPro" id="IPR023561">
    <property type="entry name" value="Carbonic_anhydrase_a-class"/>
</dbReference>
<dbReference type="PANTHER" id="PTHR18952">
    <property type="entry name" value="CARBONIC ANHYDRASE"/>
    <property type="match status" value="1"/>
</dbReference>
<dbReference type="PANTHER" id="PTHR18952:SF124">
    <property type="entry name" value="CARBONIC ANHYDRASE 7"/>
    <property type="match status" value="1"/>
</dbReference>
<dbReference type="Pfam" id="PF00194">
    <property type="entry name" value="Carb_anhydrase"/>
    <property type="match status" value="1"/>
</dbReference>
<dbReference type="SMART" id="SM01057">
    <property type="entry name" value="Carb_anhydrase"/>
    <property type="match status" value="1"/>
</dbReference>
<dbReference type="SUPFAM" id="SSF51069">
    <property type="entry name" value="Carbonic anhydrase"/>
    <property type="match status" value="1"/>
</dbReference>
<dbReference type="PROSITE" id="PS51144">
    <property type="entry name" value="ALPHA_CA_2"/>
    <property type="match status" value="1"/>
</dbReference>
<keyword id="KW-1015">Disulfide bond</keyword>
<keyword id="KW-0945">Host-virus interaction</keyword>
<keyword id="KW-0426">Late protein</keyword>
<keyword id="KW-0472">Membrane</keyword>
<keyword id="KW-0812">Transmembrane</keyword>
<keyword id="KW-1133">Transmembrane helix</keyword>
<keyword id="KW-1161">Viral attachment to host cell</keyword>
<keyword id="KW-0261">Viral envelope protein</keyword>
<keyword id="KW-0946">Virion</keyword>
<keyword id="KW-1160">Virus entry into host cell</keyword>
<comment type="function">
    <text evidence="1">Binds to chondroitin sulfate on the cell surface to provide virion attachment to target cell.</text>
</comment>
<comment type="subunit">
    <text evidence="2">Homodimer; disulfide-linked.</text>
</comment>
<comment type="subcellular location">
    <subcellularLocation>
        <location evidence="2">Virion membrane</location>
    </subcellularLocation>
    <text evidence="2">Component of the mature virion (MV) membrane.</text>
</comment>
<comment type="induction">
    <text>Expressed in the late phase of the viral replicative cycle.</text>
</comment>
<comment type="PTM">
    <text evidence="2">Apparently non-glycosylated.</text>
</comment>
<comment type="similarity">
    <text evidence="5">Belongs to the alpha-carbonic anhydrase family.</text>
</comment>
<reference key="1">
    <citation type="submission" date="1998-09" db="EMBL/GenBank/DDBJ databases">
        <title>Complete genomic sequence of vaccinia virus (Tian Tan strain).</title>
        <authorList>
            <person name="Jin Q."/>
            <person name="Hou Y.D."/>
            <person name="Cheng N.H."/>
            <person name="Yao E.M."/>
            <person name="Cheng S.X."/>
            <person name="Yang X.K."/>
            <person name="Jing D.Y."/>
            <person name="Yu W.H."/>
            <person name="Yuan J.S."/>
            <person name="Ma X.J."/>
        </authorList>
    </citation>
    <scope>NUCLEOTIDE SEQUENCE [LARGE SCALE GENOMIC DNA]</scope>
</reference>
<evidence type="ECO:0000250" key="1"/>
<evidence type="ECO:0000250" key="2">
    <source>
        <dbReference type="UniProtKB" id="P04195"/>
    </source>
</evidence>
<evidence type="ECO:0000255" key="3"/>
<evidence type="ECO:0000255" key="4">
    <source>
        <dbReference type="PROSITE-ProRule" id="PRU01134"/>
    </source>
</evidence>
<evidence type="ECO:0000305" key="5"/>
<accession>Q9JFA1</accession>
<organism>
    <name type="scientific">Vaccinia virus (strain Tian Tan)</name>
    <name type="common">VACV</name>
    <dbReference type="NCBI Taxonomy" id="10253"/>
    <lineage>
        <taxon>Viruses</taxon>
        <taxon>Varidnaviria</taxon>
        <taxon>Bamfordvirae</taxon>
        <taxon>Nucleocytoviricota</taxon>
        <taxon>Pokkesviricetes</taxon>
        <taxon>Chitovirales</taxon>
        <taxon>Poxviridae</taxon>
        <taxon>Chordopoxvirinae</taxon>
        <taxon>Orthopoxvirus</taxon>
        <taxon>Vaccinia virus</taxon>
    </lineage>
</organism>
<protein>
    <recommendedName>
        <fullName>Cell surface-binding protein OPG105</fullName>
    </recommendedName>
    <alternativeName>
        <fullName>Carbonic anhydrase homolog</fullName>
    </alternativeName>
</protein>
<sequence length="304" mass="35444">MPQQLSPINIETKKAISNARLKPLDIHYNESKPTTIQNTGKLVRINFKGGYISGGFLPNEYVLSSLHIYWGKEDDYGSNHLIDVYKYSGEINLVHWNKKKYSSYEEAKKHDDGLIIISIFLQVSDHKNVYFQKIVNQLDSIRSANTSAPFDSVFYLDNLLPSKLDYFTYLGTTINHSADAVWIIFPTPINIHSDQLSKFRTLLSSSNHEGKPHYITENYRNPYKLNDDTQVYYSGEIIRAATTPPARENYFMRWLSDLRETCFSYYQKYIEENKTFAIIAIVFVFILTAILFFMSRRYSREKQN</sequence>